<reference key="1">
    <citation type="journal article" date="2005" name="Nature">
        <title>The map-based sequence of the rice genome.</title>
        <authorList>
            <consortium name="International rice genome sequencing project (IRGSP)"/>
        </authorList>
    </citation>
    <scope>NUCLEOTIDE SEQUENCE [LARGE SCALE GENOMIC DNA]</scope>
    <source>
        <strain>cv. Nipponbare</strain>
    </source>
</reference>
<reference key="2">
    <citation type="journal article" date="2008" name="Nucleic Acids Res.">
        <title>The rice annotation project database (RAP-DB): 2008 update.</title>
        <authorList>
            <consortium name="The rice annotation project (RAP)"/>
        </authorList>
    </citation>
    <scope>GENOME REANNOTATION</scope>
    <source>
        <strain>cv. Nipponbare</strain>
    </source>
</reference>
<reference key="3">
    <citation type="journal article" date="2013" name="Rice">
        <title>Improvement of the Oryza sativa Nipponbare reference genome using next generation sequence and optical map data.</title>
        <authorList>
            <person name="Kawahara Y."/>
            <person name="de la Bastide M."/>
            <person name="Hamilton J.P."/>
            <person name="Kanamori H."/>
            <person name="McCombie W.R."/>
            <person name="Ouyang S."/>
            <person name="Schwartz D.C."/>
            <person name="Tanaka T."/>
            <person name="Wu J."/>
            <person name="Zhou S."/>
            <person name="Childs K.L."/>
            <person name="Davidson R.M."/>
            <person name="Lin H."/>
            <person name="Quesada-Ocampo L."/>
            <person name="Vaillancourt B."/>
            <person name="Sakai H."/>
            <person name="Lee S.S."/>
            <person name="Kim J."/>
            <person name="Numa H."/>
            <person name="Itoh T."/>
            <person name="Buell C.R."/>
            <person name="Matsumoto T."/>
        </authorList>
    </citation>
    <scope>GENOME REANNOTATION</scope>
    <source>
        <strain>cv. Nipponbare</strain>
    </source>
</reference>
<reference key="4">
    <citation type="submission" date="2006-10" db="EMBL/GenBank/DDBJ databases">
        <title>Oryza sativa full length cDNA.</title>
        <authorList>
            <consortium name="The rice full-length cDNA consortium"/>
        </authorList>
    </citation>
    <scope>NUCLEOTIDE SEQUENCE [LARGE SCALE MRNA]</scope>
    <source>
        <strain>cv. Nipponbare</strain>
    </source>
</reference>
<reference key="5">
    <citation type="journal article" date="2004" name="J. Biosci.">
        <title>Heat stress response in plants: a complex game with chaperones and more than twenty heat stress transcription factors.</title>
        <authorList>
            <person name="Baniwal S.K."/>
            <person name="Bharti K."/>
            <person name="Chan K.Y."/>
            <person name="Fauth M."/>
            <person name="Ganguli A."/>
            <person name="Kotak S."/>
            <person name="Mishra S.K."/>
            <person name="Nover L."/>
            <person name="Port M."/>
            <person name="Scharf K.-D."/>
            <person name="Tripp J."/>
            <person name="Weber C."/>
            <person name="Zielinski D."/>
            <person name="von Koskull-Doering P."/>
        </authorList>
    </citation>
    <scope>GENE FAMILY</scope>
    <scope>NOMENCLATURE</scope>
</reference>
<reference key="6">
    <citation type="journal article" date="2008" name="J. Genet. Genomics">
        <title>Genome-wide analysis of heat shock transcription factor families in rice and Arabidopsis.</title>
        <authorList>
            <person name="Guo J."/>
            <person name="Wu J."/>
            <person name="Ji Q."/>
            <person name="Wang C."/>
            <person name="Luo L."/>
            <person name="Yuan Y."/>
            <person name="Wang Y."/>
            <person name="Wang J."/>
        </authorList>
    </citation>
    <scope>GENE FAMILY</scope>
    <scope>NOMENCLATURE</scope>
</reference>
<comment type="function">
    <text evidence="1">Transcriptional regulator that specifically binds DNA of heat shock promoter elements (HSE).</text>
</comment>
<comment type="subunit">
    <text evidence="1">Homotrimer.</text>
</comment>
<comment type="subcellular location">
    <subcellularLocation>
        <location evidence="4">Cytoplasm</location>
    </subcellularLocation>
    <subcellularLocation>
        <location evidence="4">Nucleus</location>
    </subcellularLocation>
</comment>
<comment type="domain">
    <text>The hydrophobic-rich region (HR-A/B) corresponds to the oligomerization domain.</text>
</comment>
<comment type="PTM">
    <text evidence="1">Exhibits temperature-dependent phosphorylation.</text>
</comment>
<comment type="similarity">
    <text evidence="4">Belongs to the HSF family. Class B subfamily.</text>
</comment>
<evidence type="ECO:0000250" key="1"/>
<evidence type="ECO:0000255" key="2"/>
<evidence type="ECO:0000256" key="3">
    <source>
        <dbReference type="SAM" id="MobiDB-lite"/>
    </source>
</evidence>
<evidence type="ECO:0000305" key="4"/>
<organism>
    <name type="scientific">Oryza sativa subsp. japonica</name>
    <name type="common">Rice</name>
    <dbReference type="NCBI Taxonomy" id="39947"/>
    <lineage>
        <taxon>Eukaryota</taxon>
        <taxon>Viridiplantae</taxon>
        <taxon>Streptophyta</taxon>
        <taxon>Embryophyta</taxon>
        <taxon>Tracheophyta</taxon>
        <taxon>Spermatophyta</taxon>
        <taxon>Magnoliopsida</taxon>
        <taxon>Liliopsida</taxon>
        <taxon>Poales</taxon>
        <taxon>Poaceae</taxon>
        <taxon>BOP clade</taxon>
        <taxon>Oryzoideae</taxon>
        <taxon>Oryzeae</taxon>
        <taxon>Oryzinae</taxon>
        <taxon>Oryza</taxon>
        <taxon>Oryza sativa</taxon>
    </lineage>
</organism>
<feature type="chain" id="PRO_0000350839" description="Heat stress transcription factor B-4c">
    <location>
        <begin position="1"/>
        <end position="394"/>
    </location>
</feature>
<feature type="region of interest" description="Hydrophobic repeat HR-A/B">
    <location>
        <begin position="219"/>
        <end position="248"/>
    </location>
</feature>
<feature type="region of interest" description="Disordered" evidence="3">
    <location>
        <begin position="276"/>
        <end position="394"/>
    </location>
</feature>
<feature type="short sequence motif" description="Nuclear localization signal" evidence="2">
    <location>
        <begin position="269"/>
        <end position="271"/>
    </location>
</feature>
<feature type="short sequence motif" description="Nuclear export signal" evidence="2">
    <location>
        <begin position="365"/>
        <end position="372"/>
    </location>
</feature>
<feature type="compositionally biased region" description="Low complexity" evidence="3">
    <location>
        <begin position="278"/>
        <end position="291"/>
    </location>
</feature>
<feature type="compositionally biased region" description="Polar residues" evidence="3">
    <location>
        <begin position="316"/>
        <end position="326"/>
    </location>
</feature>
<feature type="compositionally biased region" description="Low complexity" evidence="3">
    <location>
        <begin position="375"/>
        <end position="394"/>
    </location>
</feature>
<dbReference type="EMBL" id="AP005655">
    <property type="protein sequence ID" value="BAD38277.1"/>
    <property type="molecule type" value="Genomic_DNA"/>
</dbReference>
<dbReference type="EMBL" id="AP008215">
    <property type="protein sequence ID" value="BAF25270.1"/>
    <property type="molecule type" value="Genomic_DNA"/>
</dbReference>
<dbReference type="EMBL" id="AP014965">
    <property type="protein sequence ID" value="BAT08422.1"/>
    <property type="molecule type" value="Genomic_DNA"/>
</dbReference>
<dbReference type="EMBL" id="AK241190">
    <property type="protein sequence ID" value="BAH00976.1"/>
    <property type="molecule type" value="mRNA"/>
</dbReference>
<dbReference type="RefSeq" id="XP_015611002.1">
    <property type="nucleotide sequence ID" value="XM_015755516.1"/>
</dbReference>
<dbReference type="SMR" id="Q67U94"/>
<dbReference type="FunCoup" id="Q67U94">
    <property type="interactions" value="790"/>
</dbReference>
<dbReference type="IntAct" id="Q67U94">
    <property type="interactions" value="1"/>
</dbReference>
<dbReference type="MINT" id="Q67U94"/>
<dbReference type="STRING" id="39947.Q67U94"/>
<dbReference type="PaxDb" id="39947-Q67U94"/>
<dbReference type="EnsemblPlants" id="Os09t0455200-01">
    <property type="protein sequence ID" value="Os09t0455200-01"/>
    <property type="gene ID" value="Os09g0455200"/>
</dbReference>
<dbReference type="Gramene" id="Os09t0455200-01">
    <property type="protein sequence ID" value="Os09t0455200-01"/>
    <property type="gene ID" value="Os09g0455200"/>
</dbReference>
<dbReference type="KEGG" id="dosa:Os09g0455200"/>
<dbReference type="eggNOG" id="KOG0627">
    <property type="taxonomic scope" value="Eukaryota"/>
</dbReference>
<dbReference type="HOGENOM" id="CLU_030308_3_1_1"/>
<dbReference type="InParanoid" id="Q67U94"/>
<dbReference type="OMA" id="RGCNEES"/>
<dbReference type="OrthoDB" id="60033at2759"/>
<dbReference type="Proteomes" id="UP000000763">
    <property type="component" value="Chromosome 9"/>
</dbReference>
<dbReference type="Proteomes" id="UP000059680">
    <property type="component" value="Chromosome 9"/>
</dbReference>
<dbReference type="GO" id="GO:0005737">
    <property type="term" value="C:cytoplasm"/>
    <property type="evidence" value="ECO:0007669"/>
    <property type="project" value="UniProtKB-SubCell"/>
</dbReference>
<dbReference type="GO" id="GO:0005634">
    <property type="term" value="C:nucleus"/>
    <property type="evidence" value="ECO:0000318"/>
    <property type="project" value="GO_Central"/>
</dbReference>
<dbReference type="GO" id="GO:0003700">
    <property type="term" value="F:DNA-binding transcription factor activity"/>
    <property type="evidence" value="ECO:0000318"/>
    <property type="project" value="GO_Central"/>
</dbReference>
<dbReference type="GO" id="GO:0043565">
    <property type="term" value="F:sequence-specific DNA binding"/>
    <property type="evidence" value="ECO:0007669"/>
    <property type="project" value="InterPro"/>
</dbReference>
<dbReference type="GO" id="GO:0006357">
    <property type="term" value="P:regulation of transcription by RNA polymerase II"/>
    <property type="evidence" value="ECO:0000318"/>
    <property type="project" value="GO_Central"/>
</dbReference>
<dbReference type="FunFam" id="1.10.10.10:FF:000037">
    <property type="entry name" value="Heat stress transcription factor B-4"/>
    <property type="match status" value="1"/>
</dbReference>
<dbReference type="Gene3D" id="1.10.10.10">
    <property type="entry name" value="Winged helix-like DNA-binding domain superfamily/Winged helix DNA-binding domain"/>
    <property type="match status" value="1"/>
</dbReference>
<dbReference type="InterPro" id="IPR000232">
    <property type="entry name" value="HSF_DNA-bd"/>
</dbReference>
<dbReference type="InterPro" id="IPR036388">
    <property type="entry name" value="WH-like_DNA-bd_sf"/>
</dbReference>
<dbReference type="InterPro" id="IPR036390">
    <property type="entry name" value="WH_DNA-bd_sf"/>
</dbReference>
<dbReference type="PANTHER" id="PTHR10015">
    <property type="entry name" value="HEAT SHOCK TRANSCRIPTION FACTOR"/>
    <property type="match status" value="1"/>
</dbReference>
<dbReference type="PANTHER" id="PTHR10015:SF411">
    <property type="entry name" value="HEAT STRESS TRANSCRIPTION FACTOR B-4A-RELATED"/>
    <property type="match status" value="1"/>
</dbReference>
<dbReference type="Pfam" id="PF00447">
    <property type="entry name" value="HSF_DNA-bind"/>
    <property type="match status" value="1"/>
</dbReference>
<dbReference type="PRINTS" id="PR00056">
    <property type="entry name" value="HSFDOMAIN"/>
</dbReference>
<dbReference type="SMART" id="SM00415">
    <property type="entry name" value="HSF"/>
    <property type="match status" value="1"/>
</dbReference>
<dbReference type="SUPFAM" id="SSF46785">
    <property type="entry name" value="Winged helix' DNA-binding domain"/>
    <property type="match status" value="1"/>
</dbReference>
<dbReference type="PROSITE" id="PS00434">
    <property type="entry name" value="HSF_DOMAIN"/>
    <property type="match status" value="1"/>
</dbReference>
<sequence length="394" mass="42036">MERCGSWSDCEAAAAAAQKAVPAPFLTKTYQLVDDPATDHIVSWGDDRVSTFVVWRPPEFARDILPNYFKHNNFSSFVRQLNTYGFRKVVPERWEFANEFFRKGEKQLLTEIHRRKTSSASTASPSPPPFFAPPHFPLFHHPGVAAAQHHHAFVGDDGVVAAHGIGMPFPQPHWREPNLPVATRLLALGGPAPSPSSAEAGGAGRAATAAVLMEENERLRRSNTALLQELAHMRKLYNDIIYFVQNHVRPVAPSPAAAAFLQGLGMQARKKPAAANVLNNSGGSTTSSSSLTIAEEPSPPPQQQHLAGEKSGGEAGNSSAARSSAPTKLFGVHLSAAPCGAGSKRASSPEEHPPTSPATKPRLVLECDDLSLTVAPSSSSQQQLSAASSPTSTS</sequence>
<proteinExistence type="evidence at transcript level"/>
<protein>
    <recommendedName>
        <fullName>Heat stress transcription factor B-4c</fullName>
    </recommendedName>
    <alternativeName>
        <fullName>Heat stress transcription factor 22</fullName>
        <shortName>OsHsf-22</shortName>
    </alternativeName>
</protein>
<accession>Q67U94</accession>
<accession>B7F8M8</accession>
<name>HFB4C_ORYSJ</name>
<keyword id="KW-0963">Cytoplasm</keyword>
<keyword id="KW-0238">DNA-binding</keyword>
<keyword id="KW-0539">Nucleus</keyword>
<keyword id="KW-0597">Phosphoprotein</keyword>
<keyword id="KW-1185">Reference proteome</keyword>
<keyword id="KW-0346">Stress response</keyword>
<keyword id="KW-0804">Transcription</keyword>
<keyword id="KW-0805">Transcription regulation</keyword>
<gene>
    <name type="primary">HSFB4C</name>
    <name type="synonym">HSF22</name>
    <name type="ordered locus">Os09g0455200</name>
    <name type="ordered locus">LOC_Os09g28200</name>
    <name type="ORF">P0025H07.19</name>
</gene>